<name>NTE1_ASPTN</name>
<keyword id="KW-0256">Endoplasmic reticulum</keyword>
<keyword id="KW-0378">Hydrolase</keyword>
<keyword id="KW-0442">Lipid degradation</keyword>
<keyword id="KW-0443">Lipid metabolism</keyword>
<keyword id="KW-0472">Membrane</keyword>
<keyword id="KW-1185">Reference proteome</keyword>
<keyword id="KW-0677">Repeat</keyword>
<keyword id="KW-0812">Transmembrane</keyword>
<keyword id="KW-1133">Transmembrane helix</keyword>
<sequence>MADDGGPFPLSSSLLHASSSTTILESSSSSLLATSSPAIAATFSSFSGRPSSYLPPPPLPPPAPSTMVGWIGWVFSFVFQVIPSILYWAITFCTITLPTWLFTLFSMSLTFTMNFTTLLLIALAIVSTVSWFIRYRFLNMYSRLPPEPQRKEPQLDLFPDVQEGDSKPGLANYLDEFLSAIKVFGYLERPVFHELTRTMQTRKLIAGETLLLEEEKGFCLVVDGLVQIFVKSIRDGKSPADHELNLAGDDSTDEEGQNVDGRQGYQLLTEVKNGASMSSLFSILSLFTEDIQLRTSESLSSSVSSVGPNLARVPDSSPSSPRGLVHSPVPVREPSESGHNLPTNGEFLPTVPPLHLEESRGTPDHDHQPESRTRPGKKRRKSVHPDIVARAMVDTTIAIIPASAFRRLTRVYPRATAHIVQVILTRLQRVTFATAHSYLGLTNEVLGIEKQMTKFTTYDLPNDMRGAALDRLKDKFIKERDRLGHEEVTKGIALHNPSAGRRRRSSSFLRKEAALQARMATTPRRPTATGSQENMSFHDRDAAGVSPGDLLSTIQLSRFGPRYEHLAPKIYSPLAEKEQSPFRPPTMRGPASPFHRKESLDEDALFRESILDCIMKALGLTSSTRDILRKSSHNSGDASPKLLSYDSRRQKAVFSNNAFGFIDPYEGSVDGETESMMSMSVTSAGGTSPIVNLREELRNDIEIVYFPQGSVLVEQGERHPGLYYVIDGFLDVGMPACDKGDDLVGATRPAHGEEAFPTLKRTTTASSRTSSVAPGGSDSKRRRQSRKSLYLIKPGGIQGYVGSVASYRSYTDVLAKTDVYVGFLPRASLERIAERYPIALLTLAKRLTSLLPRLLLHIDFALEWVQVNAGQVIYHQGDESDAIYLVLNGRLRSVLEGTDGKMNVVGEYGQGESVGELEVMTESTRPATLHAIRDTELAKFPRSLFNSLAQEHPGITIQVSKLIAQRMRDLVERPMTEKGAEHGAGSIKTATSTVNLRTVSILPVTAGVPVVEFGHRLLNALHQIGVTNGVTSLNQAAILNHLGRHAFTKMGKLKLSQYLADLEEKYGMVLYIADTNVNSPWTQTCITQADCILLVGLAESTPSIGEYERFLLGMKTTSRKELVLLHADRYCPPGLTRRWLKNRVWINGGHHHIQMGFRLTAEPSHPQTKRFGTVLKERVQVIQAEIQKYTSRRIHQTALYSAQTPFKGDFHRLARRLCGRSVGLVLGGGGARGIAQVGVIKALEEAGIPIDIIGGTSIGAFNGALYARDADVVPMYGRAKKFAGRMGSMWRFALDLTYPTVSYTTGHEFNRGIFKTFGDSQIEDFWLEFYCNTTNISKSRPEYHSSGYVWRYVRASMTLAGLIPPICDEGSMLLDGGYIDNLTVPHMKGLGADVIFAVDVGSIDDNTPQGYGDSLSGFWATINRWNPFSSVPNPPTLSEIQARLAYVSSFENLEQAKTTPGCLYMRPPIDPYGTLDFGKFDEIYQVGYKYGKEYLEKLKNEGTLPLREETEEKKKLQRTLAPRRASI</sequence>
<feature type="chain" id="PRO_0000295313" description="Lysophospholipase nte1">
    <location>
        <begin position="1"/>
        <end position="1527"/>
    </location>
</feature>
<feature type="topological domain" description="Cytoplasmic" evidence="1">
    <location>
        <begin position="1"/>
        <end position="69"/>
    </location>
</feature>
<feature type="transmembrane region" description="Helical" evidence="2">
    <location>
        <begin position="70"/>
        <end position="90"/>
    </location>
</feature>
<feature type="topological domain" description="Lumenal" evidence="1">
    <location>
        <begin position="91"/>
        <end position="112"/>
    </location>
</feature>
<feature type="transmembrane region" description="Helical" evidence="2">
    <location>
        <begin position="113"/>
        <end position="133"/>
    </location>
</feature>
<feature type="topological domain" description="Cytoplasmic" evidence="1">
    <location>
        <begin position="134"/>
        <end position="1527"/>
    </location>
</feature>
<feature type="domain" description="PNPLA" evidence="3">
    <location>
        <begin position="1224"/>
        <end position="1388"/>
    </location>
</feature>
<feature type="region of interest" description="Disordered" evidence="4">
    <location>
        <begin position="240"/>
        <end position="259"/>
    </location>
</feature>
<feature type="region of interest" description="Disordered" evidence="4">
    <location>
        <begin position="299"/>
        <end position="387"/>
    </location>
</feature>
<feature type="region of interest" description="Disordered" evidence="4">
    <location>
        <begin position="576"/>
        <end position="596"/>
    </location>
</feature>
<feature type="region of interest" description="Disordered" evidence="4">
    <location>
        <begin position="750"/>
        <end position="785"/>
    </location>
</feature>
<feature type="short sequence motif" description="GXGXXG" evidence="3">
    <location>
        <begin position="1228"/>
        <end position="1233"/>
    </location>
</feature>
<feature type="short sequence motif" description="GXSXG" evidence="3">
    <location>
        <begin position="1255"/>
        <end position="1259"/>
    </location>
</feature>
<feature type="short sequence motif" description="DGA/G" evidence="3">
    <location>
        <begin position="1375"/>
        <end position="1377"/>
    </location>
</feature>
<feature type="compositionally biased region" description="Basic and acidic residues" evidence="4">
    <location>
        <begin position="355"/>
        <end position="373"/>
    </location>
</feature>
<feature type="compositionally biased region" description="Low complexity" evidence="4">
    <location>
        <begin position="761"/>
        <end position="771"/>
    </location>
</feature>
<feature type="active site" description="Nucleophile" evidence="3">
    <location>
        <position position="1257"/>
    </location>
</feature>
<feature type="active site" description="Proton acceptor" evidence="3">
    <location>
        <position position="1375"/>
    </location>
</feature>
<feature type="binding site">
    <location>
        <begin position="685"/>
        <end position="804"/>
    </location>
    <ligand>
        <name>a nucleoside 3',5'-cyclic phosphate</name>
        <dbReference type="ChEBI" id="CHEBI:58464"/>
        <label>1</label>
    </ligand>
</feature>
<feature type="binding site">
    <location>
        <begin position="846"/>
        <end position="966"/>
    </location>
    <ligand>
        <name>a nucleoside 3',5'-cyclic phosphate</name>
        <dbReference type="ChEBI" id="CHEBI:58464"/>
        <label>2</label>
    </ligand>
</feature>
<proteinExistence type="inferred from homology"/>
<dbReference type="EC" id="3.1.1.5"/>
<dbReference type="EMBL" id="CH476599">
    <property type="protein sequence ID" value="EAU35254.1"/>
    <property type="molecule type" value="Genomic_DNA"/>
</dbReference>
<dbReference type="RefSeq" id="XP_001213985.1">
    <property type="nucleotide sequence ID" value="XM_001213985.1"/>
</dbReference>
<dbReference type="SMR" id="Q0CNC7"/>
<dbReference type="STRING" id="341663.Q0CNC7"/>
<dbReference type="EnsemblFungi" id="EAU35254">
    <property type="protein sequence ID" value="EAU35254"/>
    <property type="gene ID" value="ATEG_04807"/>
</dbReference>
<dbReference type="GeneID" id="4320057"/>
<dbReference type="VEuPathDB" id="FungiDB:ATEG_04807"/>
<dbReference type="eggNOG" id="KOG2968">
    <property type="taxonomic scope" value="Eukaryota"/>
</dbReference>
<dbReference type="HOGENOM" id="CLU_000960_1_1_1"/>
<dbReference type="OMA" id="SSGYVWR"/>
<dbReference type="OrthoDB" id="421051at2759"/>
<dbReference type="Proteomes" id="UP000007963">
    <property type="component" value="Unassembled WGS sequence"/>
</dbReference>
<dbReference type="GO" id="GO:0005789">
    <property type="term" value="C:endoplasmic reticulum membrane"/>
    <property type="evidence" value="ECO:0007669"/>
    <property type="project" value="UniProtKB-SubCell"/>
</dbReference>
<dbReference type="GO" id="GO:0004622">
    <property type="term" value="F:lysophospholipase activity"/>
    <property type="evidence" value="ECO:0007669"/>
    <property type="project" value="UniProtKB-EC"/>
</dbReference>
<dbReference type="GO" id="GO:0034638">
    <property type="term" value="P:phosphatidylcholine catabolic process"/>
    <property type="evidence" value="ECO:0007669"/>
    <property type="project" value="EnsemblFungi"/>
</dbReference>
<dbReference type="GO" id="GO:0071071">
    <property type="term" value="P:regulation of phospholipid biosynthetic process"/>
    <property type="evidence" value="ECO:0007669"/>
    <property type="project" value="EnsemblFungi"/>
</dbReference>
<dbReference type="CDD" id="cd00038">
    <property type="entry name" value="CAP_ED"/>
    <property type="match status" value="2"/>
</dbReference>
<dbReference type="FunFam" id="2.60.120.10:FF:000062">
    <property type="entry name" value="Lysophospholipase NTE1"/>
    <property type="match status" value="1"/>
</dbReference>
<dbReference type="FunFam" id="3.40.1090.10:FF:000007">
    <property type="entry name" value="Lysophospholipase NTE1"/>
    <property type="match status" value="1"/>
</dbReference>
<dbReference type="FunFam" id="3.40.1090.10:FF:000018">
    <property type="entry name" value="Lysophospholipase NTE1"/>
    <property type="match status" value="1"/>
</dbReference>
<dbReference type="Gene3D" id="3.40.1090.10">
    <property type="entry name" value="Cytosolic phospholipase A2 catalytic domain"/>
    <property type="match status" value="2"/>
</dbReference>
<dbReference type="Gene3D" id="2.60.120.10">
    <property type="entry name" value="Jelly Rolls"/>
    <property type="match status" value="3"/>
</dbReference>
<dbReference type="InterPro" id="IPR016035">
    <property type="entry name" value="Acyl_Trfase/lysoPLipase"/>
</dbReference>
<dbReference type="InterPro" id="IPR000595">
    <property type="entry name" value="cNMP-bd_dom"/>
</dbReference>
<dbReference type="InterPro" id="IPR018490">
    <property type="entry name" value="cNMP-bd_dom_sf"/>
</dbReference>
<dbReference type="InterPro" id="IPR050301">
    <property type="entry name" value="NTE"/>
</dbReference>
<dbReference type="InterPro" id="IPR056556">
    <property type="entry name" value="NTE1_P-loop_dom"/>
</dbReference>
<dbReference type="InterPro" id="IPR002641">
    <property type="entry name" value="PNPLA_dom"/>
</dbReference>
<dbReference type="InterPro" id="IPR014710">
    <property type="entry name" value="RmlC-like_jellyroll"/>
</dbReference>
<dbReference type="PANTHER" id="PTHR14226:SF29">
    <property type="entry name" value="NEUROPATHY TARGET ESTERASE SWS"/>
    <property type="match status" value="1"/>
</dbReference>
<dbReference type="PANTHER" id="PTHR14226">
    <property type="entry name" value="NEUROPATHY TARGET ESTERASE/SWISS CHEESE D.MELANOGASTER"/>
    <property type="match status" value="1"/>
</dbReference>
<dbReference type="Pfam" id="PF00027">
    <property type="entry name" value="cNMP_binding"/>
    <property type="match status" value="1"/>
</dbReference>
<dbReference type="Pfam" id="PF24179">
    <property type="entry name" value="NTE_Ploop"/>
    <property type="match status" value="1"/>
</dbReference>
<dbReference type="Pfam" id="PF01734">
    <property type="entry name" value="Patatin"/>
    <property type="match status" value="1"/>
</dbReference>
<dbReference type="SMART" id="SM00100">
    <property type="entry name" value="cNMP"/>
    <property type="match status" value="1"/>
</dbReference>
<dbReference type="SUPFAM" id="SSF51206">
    <property type="entry name" value="cAMP-binding domain-like"/>
    <property type="match status" value="3"/>
</dbReference>
<dbReference type="SUPFAM" id="SSF52151">
    <property type="entry name" value="FabD/lysophospholipase-like"/>
    <property type="match status" value="1"/>
</dbReference>
<dbReference type="PROSITE" id="PS50042">
    <property type="entry name" value="CNMP_BINDING_3"/>
    <property type="match status" value="2"/>
</dbReference>
<dbReference type="PROSITE" id="PS51635">
    <property type="entry name" value="PNPLA"/>
    <property type="match status" value="1"/>
</dbReference>
<organism>
    <name type="scientific">Aspergillus terreus (strain NIH 2624 / FGSC A1156)</name>
    <dbReference type="NCBI Taxonomy" id="341663"/>
    <lineage>
        <taxon>Eukaryota</taxon>
        <taxon>Fungi</taxon>
        <taxon>Dikarya</taxon>
        <taxon>Ascomycota</taxon>
        <taxon>Pezizomycotina</taxon>
        <taxon>Eurotiomycetes</taxon>
        <taxon>Eurotiomycetidae</taxon>
        <taxon>Eurotiales</taxon>
        <taxon>Aspergillaceae</taxon>
        <taxon>Aspergillus</taxon>
        <taxon>Aspergillus subgen. Circumdati</taxon>
    </lineage>
</organism>
<protein>
    <recommendedName>
        <fullName>Lysophospholipase nte1</fullName>
        <ecNumber>3.1.1.5</ecNumber>
    </recommendedName>
    <alternativeName>
        <fullName>Intracellular phospholipase B</fullName>
    </alternativeName>
    <alternativeName>
        <fullName>Neuropathy target esterase homolog</fullName>
    </alternativeName>
</protein>
<reference key="1">
    <citation type="submission" date="2005-09" db="EMBL/GenBank/DDBJ databases">
        <title>Annotation of the Aspergillus terreus NIH2624 genome.</title>
        <authorList>
            <person name="Birren B.W."/>
            <person name="Lander E.S."/>
            <person name="Galagan J.E."/>
            <person name="Nusbaum C."/>
            <person name="Devon K."/>
            <person name="Henn M."/>
            <person name="Ma L.-J."/>
            <person name="Jaffe D.B."/>
            <person name="Butler J."/>
            <person name="Alvarez P."/>
            <person name="Gnerre S."/>
            <person name="Grabherr M."/>
            <person name="Kleber M."/>
            <person name="Mauceli E.W."/>
            <person name="Brockman W."/>
            <person name="Rounsley S."/>
            <person name="Young S.K."/>
            <person name="LaButti K."/>
            <person name="Pushparaj V."/>
            <person name="DeCaprio D."/>
            <person name="Crawford M."/>
            <person name="Koehrsen M."/>
            <person name="Engels R."/>
            <person name="Montgomery P."/>
            <person name="Pearson M."/>
            <person name="Howarth C."/>
            <person name="Larson L."/>
            <person name="Luoma S."/>
            <person name="White J."/>
            <person name="Alvarado L."/>
            <person name="Kodira C.D."/>
            <person name="Zeng Q."/>
            <person name="Oleary S."/>
            <person name="Yandava C."/>
            <person name="Denning D.W."/>
            <person name="Nierman W.C."/>
            <person name="Milne T."/>
            <person name="Madden K."/>
        </authorList>
    </citation>
    <scope>NUCLEOTIDE SEQUENCE [LARGE SCALE GENOMIC DNA]</scope>
    <source>
        <strain>NIH 2624 / FGSC A1156</strain>
    </source>
</reference>
<evidence type="ECO:0000250" key="1"/>
<evidence type="ECO:0000255" key="2"/>
<evidence type="ECO:0000255" key="3">
    <source>
        <dbReference type="PROSITE-ProRule" id="PRU01161"/>
    </source>
</evidence>
<evidence type="ECO:0000256" key="4">
    <source>
        <dbReference type="SAM" id="MobiDB-lite"/>
    </source>
</evidence>
<evidence type="ECO:0000305" key="5"/>
<gene>
    <name type="primary">nte1</name>
    <name type="ORF">ATEG_04807</name>
</gene>
<accession>Q0CNC7</accession>
<comment type="function">
    <text evidence="1">Intracellular phospholipase B that catalyzes the double deacylation of phosphatidylcholine (PC) to glycerophosphocholine (GroPCho). Plays an important role in membrane lipid homeostasis. Responsible for the rapid PC turnover in response to inositol, elevated temperatures, or when choline is present in the growth medium (By similarity).</text>
</comment>
<comment type="catalytic activity">
    <reaction>
        <text>a 1-acyl-sn-glycero-3-phosphocholine + H2O = sn-glycerol 3-phosphocholine + a fatty acid + H(+)</text>
        <dbReference type="Rhea" id="RHEA:15177"/>
        <dbReference type="ChEBI" id="CHEBI:15377"/>
        <dbReference type="ChEBI" id="CHEBI:15378"/>
        <dbReference type="ChEBI" id="CHEBI:16870"/>
        <dbReference type="ChEBI" id="CHEBI:28868"/>
        <dbReference type="ChEBI" id="CHEBI:58168"/>
        <dbReference type="EC" id="3.1.1.5"/>
    </reaction>
</comment>
<comment type="activity regulation">
    <text evidence="1">Inhibited by organophosphorus esters.</text>
</comment>
<comment type="subcellular location">
    <subcellularLocation>
        <location evidence="1">Endoplasmic reticulum membrane</location>
        <topology evidence="1">Multi-pass membrane protein</topology>
    </subcellularLocation>
</comment>
<comment type="similarity">
    <text evidence="5">Belongs to the NTE family.</text>
</comment>